<gene>
    <name type="primary">AAP7</name>
    <name type="ordered locus">At5g23810</name>
    <name type="ORF">MRO11.15</name>
</gene>
<keyword id="KW-0025">Alternative splicing</keyword>
<keyword id="KW-0029">Amino-acid transport</keyword>
<keyword id="KW-1003">Cell membrane</keyword>
<keyword id="KW-0472">Membrane</keyword>
<keyword id="KW-1185">Reference proteome</keyword>
<keyword id="KW-0769">Symport</keyword>
<keyword id="KW-0812">Transmembrane</keyword>
<keyword id="KW-1133">Transmembrane helix</keyword>
<keyword id="KW-0813">Transport</keyword>
<feature type="chain" id="PRO_0000387505" description="Probable amino acid permease 7">
    <location>
        <begin position="1"/>
        <end position="467"/>
    </location>
</feature>
<feature type="topological domain" description="Cytoplasmic" evidence="2">
    <location>
        <begin position="1"/>
        <end position="29"/>
    </location>
</feature>
<feature type="transmembrane region" description="Helical" evidence="2">
    <location>
        <begin position="30"/>
        <end position="50"/>
    </location>
</feature>
<feature type="topological domain" description="Extracellular" evidence="2">
    <location>
        <begin position="51"/>
        <end position="58"/>
    </location>
</feature>
<feature type="transmembrane region" description="Helical" evidence="2">
    <location>
        <begin position="59"/>
        <end position="79"/>
    </location>
</feature>
<feature type="topological domain" description="Cytoplasmic" evidence="2">
    <location>
        <begin position="80"/>
        <end position="111"/>
    </location>
</feature>
<feature type="transmembrane region" description="Helical" evidence="2">
    <location>
        <begin position="112"/>
        <end position="132"/>
    </location>
</feature>
<feature type="topological domain" description="Extracellular" evidence="2">
    <location>
        <begin position="133"/>
        <end position="163"/>
    </location>
</feature>
<feature type="transmembrane region" description="Helical" evidence="2">
    <location>
        <begin position="164"/>
        <end position="184"/>
    </location>
</feature>
<feature type="transmembrane region" description="Helical" evidence="2">
    <location>
        <begin position="185"/>
        <end position="205"/>
    </location>
</feature>
<feature type="topological domain" description="Extracellular" evidence="2">
    <location>
        <begin position="206"/>
        <end position="231"/>
    </location>
</feature>
<feature type="transmembrane region" description="Helical" evidence="2">
    <location>
        <begin position="232"/>
        <end position="252"/>
    </location>
</feature>
<feature type="topological domain" description="Cytoplasmic" evidence="2">
    <location>
        <begin position="253"/>
        <end position="274"/>
    </location>
</feature>
<feature type="transmembrane region" description="Helical" evidence="2">
    <location>
        <begin position="275"/>
        <end position="295"/>
    </location>
</feature>
<feature type="topological domain" description="Extracellular" evidence="2">
    <location>
        <begin position="296"/>
        <end position="312"/>
    </location>
</feature>
<feature type="transmembrane region" description="Helical" evidence="2">
    <location>
        <begin position="313"/>
        <end position="333"/>
    </location>
</feature>
<feature type="topological domain" description="Cytoplasmic" evidence="2">
    <location>
        <begin position="334"/>
        <end position="383"/>
    </location>
</feature>
<feature type="transmembrane region" description="Helical" evidence="2">
    <location>
        <begin position="384"/>
        <end position="404"/>
    </location>
</feature>
<feature type="transmembrane region" description="Helical" evidence="2">
    <location>
        <begin position="405"/>
        <end position="425"/>
    </location>
</feature>
<feature type="topological domain" description="Cytoplasmic" evidence="2">
    <location>
        <begin position="426"/>
        <end position="443"/>
    </location>
</feature>
<feature type="transmembrane region" description="Helical" evidence="2">
    <location>
        <begin position="444"/>
        <end position="464"/>
    </location>
</feature>
<feature type="topological domain" description="Extracellular" evidence="2">
    <location>
        <begin position="465"/>
        <end position="467"/>
    </location>
</feature>
<feature type="splice variant" id="VSP_038275" description="In isoform 2." evidence="3">
    <original>YSQPIFAAAERSLTKKYPENKFIARFYG</original>
    <variation>SQKPLAHLTNMLVDFYVFVHILENKLPF</variation>
    <location>
        <begin position="334"/>
        <end position="361"/>
    </location>
</feature>
<feature type="splice variant" id="VSP_038276" description="In isoform 2." evidence="3">
    <location>
        <begin position="362"/>
        <end position="467"/>
    </location>
</feature>
<accession>Q9FF99</accession>
<accession>Q2V350</accession>
<accession>Q941E6</accession>
<proteinExistence type="evidence at transcript level"/>
<protein>
    <recommendedName>
        <fullName>Probable amino acid permease 7</fullName>
    </recommendedName>
    <alternativeName>
        <fullName>Amino acid transporter AAP7</fullName>
    </alternativeName>
</protein>
<dbReference type="EMBL" id="AB005244">
    <property type="protein sequence ID" value="BAB10054.1"/>
    <property type="molecule type" value="Genomic_DNA"/>
</dbReference>
<dbReference type="EMBL" id="CP002688">
    <property type="protein sequence ID" value="AED93215.1"/>
    <property type="molecule type" value="Genomic_DNA"/>
</dbReference>
<dbReference type="EMBL" id="CP002688">
    <property type="protein sequence ID" value="AED93216.1"/>
    <property type="molecule type" value="Genomic_DNA"/>
</dbReference>
<dbReference type="EMBL" id="AY052209">
    <property type="protein sequence ID" value="AAK97680.1"/>
    <property type="status" value="ALT_FRAME"/>
    <property type="molecule type" value="mRNA"/>
</dbReference>
<dbReference type="EMBL" id="AY143854">
    <property type="protein sequence ID" value="AAN28793.1"/>
    <property type="molecule type" value="mRNA"/>
</dbReference>
<dbReference type="EMBL" id="AK316999">
    <property type="protein sequence ID" value="BAH19694.1"/>
    <property type="molecule type" value="mRNA"/>
</dbReference>
<dbReference type="RefSeq" id="NP_001031934.1">
    <molecule id="Q9FF99-2"/>
    <property type="nucleotide sequence ID" value="NM_001036857.1"/>
</dbReference>
<dbReference type="RefSeq" id="NP_197770.1">
    <molecule id="Q9FF99-1"/>
    <property type="nucleotide sequence ID" value="NM_122286.4"/>
</dbReference>
<dbReference type="BioGRID" id="17721">
    <property type="interactions" value="1"/>
</dbReference>
<dbReference type="FunCoup" id="Q9FF99">
    <property type="interactions" value="3"/>
</dbReference>
<dbReference type="IntAct" id="Q9FF99">
    <property type="interactions" value="1"/>
</dbReference>
<dbReference type="STRING" id="3702.Q9FF99"/>
<dbReference type="TCDB" id="2.A.18.2.10">
    <property type="family name" value="the amino acid/auxin permease (aaap) family"/>
</dbReference>
<dbReference type="PaxDb" id="3702-AT5G23810.1"/>
<dbReference type="ProteomicsDB" id="245100">
    <molecule id="Q9FF99-1"/>
</dbReference>
<dbReference type="EnsemblPlants" id="AT5G23810.1">
    <molecule id="Q9FF99-1"/>
    <property type="protein sequence ID" value="AT5G23810.1"/>
    <property type="gene ID" value="AT5G23810"/>
</dbReference>
<dbReference type="EnsemblPlants" id="AT5G23810.2">
    <molecule id="Q9FF99-2"/>
    <property type="protein sequence ID" value="AT5G23810.2"/>
    <property type="gene ID" value="AT5G23810"/>
</dbReference>
<dbReference type="GeneID" id="832446"/>
<dbReference type="Gramene" id="AT5G23810.1">
    <molecule id="Q9FF99-1"/>
    <property type="protein sequence ID" value="AT5G23810.1"/>
    <property type="gene ID" value="AT5G23810"/>
</dbReference>
<dbReference type="Gramene" id="AT5G23810.2">
    <molecule id="Q9FF99-2"/>
    <property type="protein sequence ID" value="AT5G23810.2"/>
    <property type="gene ID" value="AT5G23810"/>
</dbReference>
<dbReference type="KEGG" id="ath:AT5G23810"/>
<dbReference type="Araport" id="AT5G23810"/>
<dbReference type="TAIR" id="AT5G23810">
    <property type="gene designation" value="AAP7"/>
</dbReference>
<dbReference type="eggNOG" id="KOG1303">
    <property type="taxonomic scope" value="Eukaryota"/>
</dbReference>
<dbReference type="HOGENOM" id="CLU_031247_4_0_1"/>
<dbReference type="InParanoid" id="Q9FF99"/>
<dbReference type="OMA" id="WVVGPAC"/>
<dbReference type="PhylomeDB" id="Q9FF99"/>
<dbReference type="PRO" id="PR:Q9FF99"/>
<dbReference type="Proteomes" id="UP000006548">
    <property type="component" value="Chromosome 5"/>
</dbReference>
<dbReference type="ExpressionAtlas" id="Q9FF99">
    <property type="expression patterns" value="baseline and differential"/>
</dbReference>
<dbReference type="GO" id="GO:0016020">
    <property type="term" value="C:membrane"/>
    <property type="evidence" value="ECO:0000250"/>
    <property type="project" value="TAIR"/>
</dbReference>
<dbReference type="GO" id="GO:0005886">
    <property type="term" value="C:plasma membrane"/>
    <property type="evidence" value="ECO:0007669"/>
    <property type="project" value="UniProtKB-SubCell"/>
</dbReference>
<dbReference type="GO" id="GO:0015293">
    <property type="term" value="F:symporter activity"/>
    <property type="evidence" value="ECO:0007669"/>
    <property type="project" value="UniProtKB-KW"/>
</dbReference>
<dbReference type="GO" id="GO:0006865">
    <property type="term" value="P:amino acid transport"/>
    <property type="evidence" value="ECO:0000250"/>
    <property type="project" value="TAIR"/>
</dbReference>
<dbReference type="InterPro" id="IPR013057">
    <property type="entry name" value="AA_transpt_TM"/>
</dbReference>
<dbReference type="PANTHER" id="PTHR48017">
    <property type="entry name" value="OS05G0424000 PROTEIN-RELATED"/>
    <property type="match status" value="1"/>
</dbReference>
<dbReference type="Pfam" id="PF01490">
    <property type="entry name" value="Aa_trans"/>
    <property type="match status" value="1"/>
</dbReference>
<organism>
    <name type="scientific">Arabidopsis thaliana</name>
    <name type="common">Mouse-ear cress</name>
    <dbReference type="NCBI Taxonomy" id="3702"/>
    <lineage>
        <taxon>Eukaryota</taxon>
        <taxon>Viridiplantae</taxon>
        <taxon>Streptophyta</taxon>
        <taxon>Embryophyta</taxon>
        <taxon>Tracheophyta</taxon>
        <taxon>Spermatophyta</taxon>
        <taxon>Magnoliopsida</taxon>
        <taxon>eudicotyledons</taxon>
        <taxon>Gunneridae</taxon>
        <taxon>Pentapetalae</taxon>
        <taxon>rosids</taxon>
        <taxon>malvids</taxon>
        <taxon>Brassicales</taxon>
        <taxon>Brassicaceae</taxon>
        <taxon>Camelineae</taxon>
        <taxon>Arabidopsis</taxon>
    </lineage>
</organism>
<reference key="1">
    <citation type="journal article" date="2002" name="J. Biol. Chem.">
        <title>High affinity amino acid transporters specifically expressed in xylem parenchyma and developing seeds of Arabidopsis.</title>
        <authorList>
            <person name="Okumoto S."/>
            <person name="Schmidt R."/>
            <person name="Tegeder M."/>
            <person name="Fischer W.-N."/>
            <person name="Rentsch D."/>
            <person name="Frommer W.B."/>
            <person name="Koch W."/>
        </authorList>
    </citation>
    <scope>NUCLEOTIDE SEQUENCE [MRNA] (ISOFORM 1)</scope>
</reference>
<reference key="2">
    <citation type="journal article" date="1997" name="DNA Res.">
        <title>Structural analysis of Arabidopsis thaliana chromosome 5. I. Sequence features of the 1.6 Mb regions covered by twenty physically assigned P1 clones.</title>
        <authorList>
            <person name="Sato S."/>
            <person name="Kotani H."/>
            <person name="Nakamura Y."/>
            <person name="Kaneko T."/>
            <person name="Asamizu E."/>
            <person name="Fukami M."/>
            <person name="Miyajima N."/>
            <person name="Tabata S."/>
        </authorList>
    </citation>
    <scope>NUCLEOTIDE SEQUENCE [LARGE SCALE GENOMIC DNA]</scope>
    <source>
        <strain>cv. Columbia</strain>
    </source>
</reference>
<reference key="3">
    <citation type="journal article" date="2017" name="Plant J.">
        <title>Araport11: a complete reannotation of the Arabidopsis thaliana reference genome.</title>
        <authorList>
            <person name="Cheng C.Y."/>
            <person name="Krishnakumar V."/>
            <person name="Chan A.P."/>
            <person name="Thibaud-Nissen F."/>
            <person name="Schobel S."/>
            <person name="Town C.D."/>
        </authorList>
    </citation>
    <scope>GENOME REANNOTATION</scope>
    <source>
        <strain>cv. Columbia</strain>
    </source>
</reference>
<reference key="4">
    <citation type="journal article" date="2003" name="Science">
        <title>Empirical analysis of transcriptional activity in the Arabidopsis genome.</title>
        <authorList>
            <person name="Yamada K."/>
            <person name="Lim J."/>
            <person name="Dale J.M."/>
            <person name="Chen H."/>
            <person name="Shinn P."/>
            <person name="Palm C.J."/>
            <person name="Southwick A.M."/>
            <person name="Wu H.C."/>
            <person name="Kim C.J."/>
            <person name="Nguyen M."/>
            <person name="Pham P.K."/>
            <person name="Cheuk R.F."/>
            <person name="Karlin-Newmann G."/>
            <person name="Liu S.X."/>
            <person name="Lam B."/>
            <person name="Sakano H."/>
            <person name="Wu T."/>
            <person name="Yu G."/>
            <person name="Miranda M."/>
            <person name="Quach H.L."/>
            <person name="Tripp M."/>
            <person name="Chang C.H."/>
            <person name="Lee J.M."/>
            <person name="Toriumi M.J."/>
            <person name="Chan M.M."/>
            <person name="Tang C.C."/>
            <person name="Onodera C.S."/>
            <person name="Deng J.M."/>
            <person name="Akiyama K."/>
            <person name="Ansari Y."/>
            <person name="Arakawa T."/>
            <person name="Banh J."/>
            <person name="Banno F."/>
            <person name="Bowser L."/>
            <person name="Brooks S.Y."/>
            <person name="Carninci P."/>
            <person name="Chao Q."/>
            <person name="Choy N."/>
            <person name="Enju A."/>
            <person name="Goldsmith A.D."/>
            <person name="Gurjal M."/>
            <person name="Hansen N.F."/>
            <person name="Hayashizaki Y."/>
            <person name="Johnson-Hopson C."/>
            <person name="Hsuan V.W."/>
            <person name="Iida K."/>
            <person name="Karnes M."/>
            <person name="Khan S."/>
            <person name="Koesema E."/>
            <person name="Ishida J."/>
            <person name="Jiang P.X."/>
            <person name="Jones T."/>
            <person name="Kawai J."/>
            <person name="Kamiya A."/>
            <person name="Meyers C."/>
            <person name="Nakajima M."/>
            <person name="Narusaka M."/>
            <person name="Seki M."/>
            <person name="Sakurai T."/>
            <person name="Satou M."/>
            <person name="Tamse R."/>
            <person name="Vaysberg M."/>
            <person name="Wallender E.K."/>
            <person name="Wong C."/>
            <person name="Yamamura Y."/>
            <person name="Yuan S."/>
            <person name="Shinozaki K."/>
            <person name="Davis R.W."/>
            <person name="Theologis A."/>
            <person name="Ecker J.R."/>
        </authorList>
    </citation>
    <scope>NUCLEOTIDE SEQUENCE [LARGE SCALE MRNA] (ISOFORM 1)</scope>
    <source>
        <strain>cv. Columbia</strain>
    </source>
</reference>
<reference key="5">
    <citation type="journal article" date="2009" name="DNA Res.">
        <title>Analysis of multiple occurrences of alternative splicing events in Arabidopsis thaliana using novel sequenced full-length cDNAs.</title>
        <authorList>
            <person name="Iida K."/>
            <person name="Fukami-Kobayashi K."/>
            <person name="Toyoda A."/>
            <person name="Sakaki Y."/>
            <person name="Kobayashi M."/>
            <person name="Seki M."/>
            <person name="Shinozaki K."/>
        </authorList>
    </citation>
    <scope>NUCLEOTIDE SEQUENCE [LARGE SCALE MRNA] (ISOFORM 2)</scope>
    <source>
        <strain>cv. Columbia</strain>
    </source>
</reference>
<name>AAP7_ARATH</name>
<evidence type="ECO:0000250" key="1"/>
<evidence type="ECO:0000255" key="2"/>
<evidence type="ECO:0000303" key="3">
    <source>
    </source>
</evidence>
<evidence type="ECO:0000305" key="4"/>
<comment type="function">
    <text evidence="1">Amino acid-proton symporter. Stereospecific transporter with a broad specificity for neutral amino acids (By similarity).</text>
</comment>
<comment type="subcellular location">
    <subcellularLocation>
        <location evidence="4">Cell membrane</location>
        <topology evidence="4">Multi-pass membrane protein</topology>
    </subcellularLocation>
</comment>
<comment type="alternative products">
    <event type="alternative splicing"/>
    <isoform>
        <id>Q9FF99-1</id>
        <name>1</name>
        <sequence type="displayed"/>
    </isoform>
    <isoform>
        <id>Q9FF99-2</id>
        <name>2</name>
        <sequence type="described" ref="VSP_038275 VSP_038276"/>
    </isoform>
</comment>
<comment type="similarity">
    <text evidence="4">Belongs to the amino acid/polyamine transporter 2 family. Amino acid/auxin permease (AAAP) (TC 2.A.18.2) subfamily.</text>
</comment>
<comment type="sequence caution" evidence="4">
    <conflict type="frameshift">
        <sequence resource="EMBL-CDS" id="AAK97680"/>
    </conflict>
</comment>
<sequence length="467" mass="51723">MDIKEDDESRVITPTELQLHDSVTARTGTLWTAVAHIITGVIGAGVLSLAWATAELGWIAGPAALIAFAGVTLLSAFLLSDCYRFPDPNNGPLRLNSYSQAVKLYLGKKNEIVCGVVVYISLFGCGIAYTIVIATCSRAIMKSNCYHRNGHNATCSYGDNNNYFMVLFGLTQIFMSQIPNFHNMVWLSLVAAIMSFTYSFIGIGLALGKIIENRKIEGSIRGIPAENRGEKVWIVFQALGNIAFSYPFSIILLEIQDTLRSPPAEKQTMKKASTVAVFIQTFFFFCCGCFGYAAFGDSTPGNLLTGFGFYEPFWLVDFANACIVLHLVGGYQVYSQPIFAAAERSLTKKYPENKFIARFYGFKLPLLRGETVRLNPMRMCLRTMYVLITTGVAVMFPYFNEVLGVVGALAFWPLAVYFPVEMCILQKKIRSWTRPWLLLRGFSFVCLLVCLLSLVGSIYGLVGAKFG</sequence>